<reference key="1">
    <citation type="journal article" date="2009" name="PLoS Genet.">
        <title>Organised genome dynamics in the Escherichia coli species results in highly diverse adaptive paths.</title>
        <authorList>
            <person name="Touchon M."/>
            <person name="Hoede C."/>
            <person name="Tenaillon O."/>
            <person name="Barbe V."/>
            <person name="Baeriswyl S."/>
            <person name="Bidet P."/>
            <person name="Bingen E."/>
            <person name="Bonacorsi S."/>
            <person name="Bouchier C."/>
            <person name="Bouvet O."/>
            <person name="Calteau A."/>
            <person name="Chiapello H."/>
            <person name="Clermont O."/>
            <person name="Cruveiller S."/>
            <person name="Danchin A."/>
            <person name="Diard M."/>
            <person name="Dossat C."/>
            <person name="Karoui M.E."/>
            <person name="Frapy E."/>
            <person name="Garry L."/>
            <person name="Ghigo J.M."/>
            <person name="Gilles A.M."/>
            <person name="Johnson J."/>
            <person name="Le Bouguenec C."/>
            <person name="Lescat M."/>
            <person name="Mangenot S."/>
            <person name="Martinez-Jehanne V."/>
            <person name="Matic I."/>
            <person name="Nassif X."/>
            <person name="Oztas S."/>
            <person name="Petit M.A."/>
            <person name="Pichon C."/>
            <person name="Rouy Z."/>
            <person name="Ruf C.S."/>
            <person name="Schneider D."/>
            <person name="Tourret J."/>
            <person name="Vacherie B."/>
            <person name="Vallenet D."/>
            <person name="Medigue C."/>
            <person name="Rocha E.P.C."/>
            <person name="Denamur E."/>
        </authorList>
    </citation>
    <scope>NUCLEOTIDE SEQUENCE [LARGE SCALE GENOMIC DNA]</scope>
    <source>
        <strain>UMN026 / ExPEC</strain>
    </source>
</reference>
<accession>B7NFK1</accession>
<name>RHAA_ECOLU</name>
<gene>
    <name evidence="1" type="primary">rhaA</name>
    <name type="ordered locus">ECUMN_4431</name>
</gene>
<protein>
    <recommendedName>
        <fullName evidence="1">L-rhamnose isomerase</fullName>
        <ecNumber evidence="1">5.3.1.14</ecNumber>
    </recommendedName>
</protein>
<organism>
    <name type="scientific">Escherichia coli O17:K52:H18 (strain UMN026 / ExPEC)</name>
    <dbReference type="NCBI Taxonomy" id="585056"/>
    <lineage>
        <taxon>Bacteria</taxon>
        <taxon>Pseudomonadati</taxon>
        <taxon>Pseudomonadota</taxon>
        <taxon>Gammaproteobacteria</taxon>
        <taxon>Enterobacterales</taxon>
        <taxon>Enterobacteriaceae</taxon>
        <taxon>Escherichia</taxon>
    </lineage>
</organism>
<comment type="function">
    <text evidence="1">Catalyzes the interconversion of L-rhamnose and L-rhamnulose.</text>
</comment>
<comment type="catalytic activity">
    <reaction evidence="1">
        <text>L-rhamnopyranose = L-rhamnulose</text>
        <dbReference type="Rhea" id="RHEA:23160"/>
        <dbReference type="ChEBI" id="CHEBI:17897"/>
        <dbReference type="ChEBI" id="CHEBI:62346"/>
        <dbReference type="EC" id="5.3.1.14"/>
    </reaction>
</comment>
<comment type="cofactor">
    <cofactor evidence="1">
        <name>Mn(2+)</name>
        <dbReference type="ChEBI" id="CHEBI:29035"/>
    </cofactor>
    <text evidence="1">Binds 1 Mn(2+) ion per subunit.</text>
</comment>
<comment type="pathway">
    <text evidence="1">Carbohydrate degradation; L-rhamnose degradation; glycerone phosphate from L-rhamnose: step 1/3.</text>
</comment>
<comment type="subunit">
    <text evidence="1">Homotetramer.</text>
</comment>
<comment type="subcellular location">
    <subcellularLocation>
        <location evidence="1">Cytoplasm</location>
    </subcellularLocation>
</comment>
<comment type="similarity">
    <text evidence="1">Belongs to the rhamnose isomerase family.</text>
</comment>
<feature type="chain" id="PRO_1000128881" description="L-rhamnose isomerase">
    <location>
        <begin position="1"/>
        <end position="419"/>
    </location>
</feature>
<feature type="binding site" evidence="1">
    <location>
        <position position="262"/>
    </location>
    <ligand>
        <name>Mn(2+)</name>
        <dbReference type="ChEBI" id="CHEBI:29035"/>
    </ligand>
</feature>
<feature type="binding site" evidence="1">
    <location>
        <position position="294"/>
    </location>
    <ligand>
        <name>Mn(2+)</name>
        <dbReference type="ChEBI" id="CHEBI:29035"/>
    </ligand>
</feature>
<feature type="binding site" evidence="1">
    <location>
        <position position="296"/>
    </location>
    <ligand>
        <name>Mn(2+)</name>
        <dbReference type="ChEBI" id="CHEBI:29035"/>
    </ligand>
</feature>
<keyword id="KW-0963">Cytoplasm</keyword>
<keyword id="KW-0413">Isomerase</keyword>
<keyword id="KW-0464">Manganese</keyword>
<keyword id="KW-0479">Metal-binding</keyword>
<keyword id="KW-0684">Rhamnose metabolism</keyword>
<proteinExistence type="inferred from homology"/>
<evidence type="ECO:0000255" key="1">
    <source>
        <dbReference type="HAMAP-Rule" id="MF_00541"/>
    </source>
</evidence>
<dbReference type="EC" id="5.3.1.14" evidence="1"/>
<dbReference type="EMBL" id="CU928163">
    <property type="protein sequence ID" value="CAR15558.1"/>
    <property type="molecule type" value="Genomic_DNA"/>
</dbReference>
<dbReference type="RefSeq" id="WP_001309886.1">
    <property type="nucleotide sequence ID" value="NC_011751.1"/>
</dbReference>
<dbReference type="RefSeq" id="YP_002415047.1">
    <property type="nucleotide sequence ID" value="NC_011751.1"/>
</dbReference>
<dbReference type="SMR" id="B7NFK1"/>
<dbReference type="STRING" id="585056.ECUMN_4431"/>
<dbReference type="KEGG" id="eum:ECUMN_4431"/>
<dbReference type="PATRIC" id="fig|585056.7.peg.4600"/>
<dbReference type="HOGENOM" id="CLU_052790_0_0_6"/>
<dbReference type="UniPathway" id="UPA00541">
    <property type="reaction ID" value="UER00601"/>
</dbReference>
<dbReference type="Proteomes" id="UP000007097">
    <property type="component" value="Chromosome"/>
</dbReference>
<dbReference type="GO" id="GO:0005737">
    <property type="term" value="C:cytoplasm"/>
    <property type="evidence" value="ECO:0007669"/>
    <property type="project" value="UniProtKB-SubCell"/>
</dbReference>
<dbReference type="GO" id="GO:0008740">
    <property type="term" value="F:L-rhamnose isomerase activity"/>
    <property type="evidence" value="ECO:0007669"/>
    <property type="project" value="UniProtKB-UniRule"/>
</dbReference>
<dbReference type="GO" id="GO:0030145">
    <property type="term" value="F:manganese ion binding"/>
    <property type="evidence" value="ECO:0007669"/>
    <property type="project" value="UniProtKB-UniRule"/>
</dbReference>
<dbReference type="GO" id="GO:0019324">
    <property type="term" value="P:L-lyxose metabolic process"/>
    <property type="evidence" value="ECO:0007669"/>
    <property type="project" value="TreeGrafter"/>
</dbReference>
<dbReference type="GO" id="GO:0019301">
    <property type="term" value="P:rhamnose catabolic process"/>
    <property type="evidence" value="ECO:0007669"/>
    <property type="project" value="UniProtKB-UniRule"/>
</dbReference>
<dbReference type="FunFam" id="3.20.20.150:FF:000006">
    <property type="entry name" value="L-rhamnose isomerase"/>
    <property type="match status" value="1"/>
</dbReference>
<dbReference type="Gene3D" id="3.20.20.150">
    <property type="entry name" value="Divalent-metal-dependent TIM barrel enzymes"/>
    <property type="match status" value="1"/>
</dbReference>
<dbReference type="HAMAP" id="MF_00541">
    <property type="entry name" value="RhaA"/>
    <property type="match status" value="1"/>
</dbReference>
<dbReference type="InterPro" id="IPR050337">
    <property type="entry name" value="L-rhamnose_isomerase"/>
</dbReference>
<dbReference type="InterPro" id="IPR009308">
    <property type="entry name" value="Rhamnose_isomerase"/>
</dbReference>
<dbReference type="InterPro" id="IPR036237">
    <property type="entry name" value="Xyl_isomerase-like_sf"/>
</dbReference>
<dbReference type="NCBIfam" id="NF002203">
    <property type="entry name" value="PRK01076.1"/>
    <property type="match status" value="1"/>
</dbReference>
<dbReference type="NCBIfam" id="TIGR01748">
    <property type="entry name" value="rhaA"/>
    <property type="match status" value="1"/>
</dbReference>
<dbReference type="PANTHER" id="PTHR30268">
    <property type="entry name" value="L-RHAMNOSE ISOMERASE"/>
    <property type="match status" value="1"/>
</dbReference>
<dbReference type="PANTHER" id="PTHR30268:SF0">
    <property type="entry name" value="L-RHAMNOSE ISOMERASE"/>
    <property type="match status" value="1"/>
</dbReference>
<dbReference type="Pfam" id="PF06134">
    <property type="entry name" value="RhaA"/>
    <property type="match status" value="1"/>
</dbReference>
<dbReference type="SUPFAM" id="SSF51658">
    <property type="entry name" value="Xylose isomerase-like"/>
    <property type="match status" value="1"/>
</dbReference>
<sequence length="419" mass="47128">MTTQLEQAWELAKQRFAAVGIDVEEALRQLDRLPVSMHCWQGDDVSGFENPEGSLTGGIQATGNYPGKARNGSELRADLEQAMRLIPGPKRLNLHAIYLESDTPVARDQIKPEHFKNWVEWAKANQLGLDFNPSCFSHPLSADGFTLSHADDSIRQFWIDHCKASRRVSAYFGEQLGTPSVMNIWIPDGMKDITVDRLAPRQRLLAALDEVISEKLDPAHHIDAVESKLFGIGAESYTVGSNEFYMGYATSRQTALCLDAGHFHPTEVISDKISAAMLYVPQLLLHVSRPVRWDSDHVVLLDDETQAIASEIVRHDLFDRVHIGLDFFDASINRIAAWVIGTRNMKKALLRALLEPTAELRKLEAAGDYSARLALLEEQKSLPWQAVWEMYCQRHDTPAGSEWLESVRAYEKEILSQRG</sequence>